<protein>
    <recommendedName>
        <fullName>Protein ROT1</fullName>
    </recommendedName>
</protein>
<proteinExistence type="inferred from homology"/>
<gene>
    <name type="primary">ROT1</name>
    <name type="ORF">PGUG_04699</name>
</gene>
<name>ROT1_PICGU</name>
<evidence type="ECO:0000250" key="1"/>
<evidence type="ECO:0000255" key="2"/>
<evidence type="ECO:0000305" key="3"/>
<organism>
    <name type="scientific">Meyerozyma guilliermondii (strain ATCC 6260 / CBS 566 / DSM 6381 / JCM 1539 / NBRC 10279 / NRRL Y-324)</name>
    <name type="common">Yeast</name>
    <name type="synonym">Candida guilliermondii</name>
    <dbReference type="NCBI Taxonomy" id="294746"/>
    <lineage>
        <taxon>Eukaryota</taxon>
        <taxon>Fungi</taxon>
        <taxon>Dikarya</taxon>
        <taxon>Ascomycota</taxon>
        <taxon>Saccharomycotina</taxon>
        <taxon>Pichiomycetes</taxon>
        <taxon>Debaryomycetaceae</taxon>
        <taxon>Meyerozyma</taxon>
    </lineage>
</organism>
<accession>A5DN48</accession>
<sequence length="241" mass="27262">MWSILWVVTTLISIVAADPNMKELAGTWTSKSNTVFTGPGFYDPVDELLIQPDLPGISYSFTEDGHYEEALYRVTSNSQNHSCATAVLIYQHGTYEILNNGSLVMTPIAVDGRQLLSDPCGYSETESQYTRYVQPTWFKAYYVQVDSYSGKMKLQIYQFDGSLMQPLYLAYSPPLMLPTKALNPTDKASETKSSLRRKVKRSLENQYRTTAVKSFNYEKYDKYWWAAVGVIGIASASVFLH</sequence>
<feature type="signal peptide" evidence="2">
    <location>
        <begin position="1"/>
        <end position="17"/>
    </location>
</feature>
<feature type="chain" id="PRO_0000333415" description="Protein ROT1">
    <location>
        <begin position="18"/>
        <end position="241"/>
    </location>
</feature>
<feature type="topological domain" description="Lumenal" evidence="2">
    <location>
        <begin position="18"/>
        <end position="222"/>
    </location>
</feature>
<feature type="transmembrane region" description="Helical" evidence="2">
    <location>
        <begin position="223"/>
        <end position="240"/>
    </location>
</feature>
<feature type="topological domain" description="Cytoplasmic" evidence="2">
    <location>
        <position position="241"/>
    </location>
</feature>
<feature type="glycosylation site" description="N-linked (GlcNAc...) asparagine" evidence="2">
    <location>
        <position position="80"/>
    </location>
</feature>
<feature type="glycosylation site" description="N-linked (GlcNAc...) asparagine" evidence="2">
    <location>
        <position position="100"/>
    </location>
</feature>
<reference key="1">
    <citation type="journal article" date="2009" name="Nature">
        <title>Evolution of pathogenicity and sexual reproduction in eight Candida genomes.</title>
        <authorList>
            <person name="Butler G."/>
            <person name="Rasmussen M.D."/>
            <person name="Lin M.F."/>
            <person name="Santos M.A.S."/>
            <person name="Sakthikumar S."/>
            <person name="Munro C.A."/>
            <person name="Rheinbay E."/>
            <person name="Grabherr M."/>
            <person name="Forche A."/>
            <person name="Reedy J.L."/>
            <person name="Agrafioti I."/>
            <person name="Arnaud M.B."/>
            <person name="Bates S."/>
            <person name="Brown A.J.P."/>
            <person name="Brunke S."/>
            <person name="Costanzo M.C."/>
            <person name="Fitzpatrick D.A."/>
            <person name="de Groot P.W.J."/>
            <person name="Harris D."/>
            <person name="Hoyer L.L."/>
            <person name="Hube B."/>
            <person name="Klis F.M."/>
            <person name="Kodira C."/>
            <person name="Lennard N."/>
            <person name="Logue M.E."/>
            <person name="Martin R."/>
            <person name="Neiman A.M."/>
            <person name="Nikolaou E."/>
            <person name="Quail M.A."/>
            <person name="Quinn J."/>
            <person name="Santos M.C."/>
            <person name="Schmitzberger F.F."/>
            <person name="Sherlock G."/>
            <person name="Shah P."/>
            <person name="Silverstein K.A.T."/>
            <person name="Skrzypek M.S."/>
            <person name="Soll D."/>
            <person name="Staggs R."/>
            <person name="Stansfield I."/>
            <person name="Stumpf M.P.H."/>
            <person name="Sudbery P.E."/>
            <person name="Srikantha T."/>
            <person name="Zeng Q."/>
            <person name="Berman J."/>
            <person name="Berriman M."/>
            <person name="Heitman J."/>
            <person name="Gow N.A.R."/>
            <person name="Lorenz M.C."/>
            <person name="Birren B.W."/>
            <person name="Kellis M."/>
            <person name="Cuomo C.A."/>
        </authorList>
    </citation>
    <scope>NUCLEOTIDE SEQUENCE [LARGE SCALE GENOMIC DNA]</scope>
    <source>
        <strain>ATCC 6260 / CBS 566 / DSM 6381 / JCM 1539 / NBRC 10279 / NRRL Y-324</strain>
    </source>
</reference>
<comment type="function">
    <text evidence="1">Required for normal levels of the cell wall 1,6-beta-glucan. Involved in a protein folding machinery chaperoning proteins acting in various physiological processes including cell wall synthesis and lysis of autophagic bodies (By similarity).</text>
</comment>
<comment type="subcellular location">
    <subcellularLocation>
        <location evidence="1">Endoplasmic reticulum membrane</location>
        <topology evidence="1">Single-pass type I membrane protein</topology>
    </subcellularLocation>
</comment>
<comment type="similarity">
    <text evidence="3">Belongs to the ROT1 family.</text>
</comment>
<dbReference type="EMBL" id="CH408160">
    <property type="protein sequence ID" value="EDK40601.2"/>
    <property type="molecule type" value="Genomic_DNA"/>
</dbReference>
<dbReference type="RefSeq" id="XP_001482744.1">
    <property type="nucleotide sequence ID" value="XM_001482694.1"/>
</dbReference>
<dbReference type="FunCoup" id="A5DN48">
    <property type="interactions" value="26"/>
</dbReference>
<dbReference type="STRING" id="294746.A5DN48"/>
<dbReference type="GlyCosmos" id="A5DN48">
    <property type="glycosylation" value="2 sites, No reported glycans"/>
</dbReference>
<dbReference type="GeneID" id="5124896"/>
<dbReference type="KEGG" id="pgu:PGUG_04699"/>
<dbReference type="VEuPathDB" id="FungiDB:PGUG_04699"/>
<dbReference type="eggNOG" id="ENOG502QQTG">
    <property type="taxonomic scope" value="Eukaryota"/>
</dbReference>
<dbReference type="HOGENOM" id="CLU_071622_0_0_1"/>
<dbReference type="InParanoid" id="A5DN48"/>
<dbReference type="OMA" id="YKPPQML"/>
<dbReference type="OrthoDB" id="5327821at2759"/>
<dbReference type="Proteomes" id="UP000001997">
    <property type="component" value="Unassembled WGS sequence"/>
</dbReference>
<dbReference type="GO" id="GO:0005789">
    <property type="term" value="C:endoplasmic reticulum membrane"/>
    <property type="evidence" value="ECO:0007669"/>
    <property type="project" value="UniProtKB-SubCell"/>
</dbReference>
<dbReference type="GO" id="GO:0051082">
    <property type="term" value="F:unfolded protein binding"/>
    <property type="evidence" value="ECO:0007669"/>
    <property type="project" value="TreeGrafter"/>
</dbReference>
<dbReference type="GO" id="GO:0006458">
    <property type="term" value="P:'de novo' protein folding"/>
    <property type="evidence" value="ECO:0007669"/>
    <property type="project" value="InterPro"/>
</dbReference>
<dbReference type="GO" id="GO:0007118">
    <property type="term" value="P:budding cell apical bud growth"/>
    <property type="evidence" value="ECO:0007669"/>
    <property type="project" value="TreeGrafter"/>
</dbReference>
<dbReference type="InterPro" id="IPR019623">
    <property type="entry name" value="Rot1"/>
</dbReference>
<dbReference type="PANTHER" id="PTHR28090">
    <property type="entry name" value="PROTEIN ROT1"/>
    <property type="match status" value="1"/>
</dbReference>
<dbReference type="PANTHER" id="PTHR28090:SF1">
    <property type="entry name" value="PROTEIN ROT1"/>
    <property type="match status" value="1"/>
</dbReference>
<dbReference type="Pfam" id="PF10681">
    <property type="entry name" value="Rot1"/>
    <property type="match status" value="1"/>
</dbReference>
<dbReference type="PIRSF" id="PIRSF017290">
    <property type="entry name" value="ROT1_prd"/>
    <property type="match status" value="1"/>
</dbReference>
<keyword id="KW-0256">Endoplasmic reticulum</keyword>
<keyword id="KW-0325">Glycoprotein</keyword>
<keyword id="KW-0472">Membrane</keyword>
<keyword id="KW-1185">Reference proteome</keyword>
<keyword id="KW-0732">Signal</keyword>
<keyword id="KW-0812">Transmembrane</keyword>
<keyword id="KW-1133">Transmembrane helix</keyword>